<evidence type="ECO:0000255" key="1"/>
<evidence type="ECO:0000269" key="2">
    <source>
    </source>
</evidence>
<evidence type="ECO:0000305" key="3"/>
<proteinExistence type="evidence at protein level"/>
<gene>
    <name type="primary">hypC</name>
    <name type="ORF">AFLA_139400</name>
</gene>
<comment type="function">
    <text evidence="2">Monooxygenase that converts norsolorinic acid anthrone to norsolorinic acid during aflatoxin biosynthesis.</text>
</comment>
<comment type="catalytic activity">
    <reaction evidence="2">
        <text>noranthrone + O2 = norsolorinic acid + H2O</text>
        <dbReference type="Rhea" id="RHEA:35191"/>
        <dbReference type="ChEBI" id="CHEBI:15377"/>
        <dbReference type="ChEBI" id="CHEBI:15379"/>
        <dbReference type="ChEBI" id="CHEBI:71533"/>
        <dbReference type="ChEBI" id="CHEBI:77904"/>
        <dbReference type="EC" id="1.13.12.20"/>
    </reaction>
</comment>
<comment type="pathway">
    <text evidence="2">Mycotoxin biosynthesis; aflatoxin biosynthesis.</text>
</comment>
<comment type="subcellular location">
    <subcellularLocation>
        <location evidence="3">Membrane</location>
        <topology evidence="3">Multi-pass membrane protein</topology>
    </subcellularLocation>
</comment>
<comment type="disruption phenotype">
    <text evidence="2">Cells accumulate excess amounts of norsolorinic acid (NA) and a small amount of norsolorinic acid anthrone (NAA).</text>
</comment>
<comment type="similarity">
    <text evidence="3">Belongs to the anthrone oxygenase family.</text>
</comment>
<keyword id="KW-0472">Membrane</keyword>
<keyword id="KW-0503">Monooxygenase</keyword>
<keyword id="KW-0560">Oxidoreductase</keyword>
<keyword id="KW-0812">Transmembrane</keyword>
<keyword id="KW-1133">Transmembrane helix</keyword>
<feature type="chain" id="PRO_0000422196" description="Noranthrone monooxygenase">
    <location>
        <begin position="1"/>
        <end position="210"/>
    </location>
</feature>
<feature type="transmembrane region" description="Helical" evidence="1">
    <location>
        <begin position="59"/>
        <end position="79"/>
    </location>
</feature>
<feature type="transmembrane region" description="Helical" evidence="1">
    <location>
        <begin position="105"/>
        <end position="125"/>
    </location>
</feature>
<feature type="transmembrane region" description="Helical" evidence="1">
    <location>
        <begin position="131"/>
        <end position="151"/>
    </location>
</feature>
<feature type="transmembrane region" description="Helical" evidence="1">
    <location>
        <begin position="188"/>
        <end position="208"/>
    </location>
</feature>
<organism>
    <name type="scientific">Aspergillus flavus (strain ATCC 200026 / FGSC A1120 / IAM 13836 / NRRL 3357 / JCM 12722 / SRRC 167)</name>
    <dbReference type="NCBI Taxonomy" id="332952"/>
    <lineage>
        <taxon>Eukaryota</taxon>
        <taxon>Fungi</taxon>
        <taxon>Dikarya</taxon>
        <taxon>Ascomycota</taxon>
        <taxon>Pezizomycotina</taxon>
        <taxon>Eurotiomycetes</taxon>
        <taxon>Eurotiomycetidae</taxon>
        <taxon>Eurotiales</taxon>
        <taxon>Aspergillaceae</taxon>
        <taxon>Aspergillus</taxon>
        <taxon>Aspergillus subgen. Circumdati</taxon>
    </lineage>
</organism>
<sequence>MEDLRDLSPRDLHKARGAKEEFKNVFLLADGELTVHASFSRIFTRRTNKMGTEYVAVLTGSFLTGAMMNLHLLTIPILIETTRQPAQLVHQWSRIFYSGHRKGPGIALVTGALYGYAAWAKYSVGEPWHHWMVAGVTTVSMVPYTWMFMNATNTALFHAEDQFEKGGVEISLQESVRLVGKWDWLNTVRALFPLAGSVMGMLGVCGVVRY</sequence>
<reference key="1">
    <citation type="journal article" date="2015" name="Genome Announc.">
        <title>Genome sequence of Aspergillus flavus NRRL 3357, a strain that causes aflatoxin contamination of food and feed.</title>
        <authorList>
            <person name="Nierman W.C."/>
            <person name="Yu J."/>
            <person name="Fedorova-Abrams N.D."/>
            <person name="Losada L."/>
            <person name="Cleveland T.E."/>
            <person name="Bhatnagar D."/>
            <person name="Bennett J.W."/>
            <person name="Dean R."/>
            <person name="Payne G.A."/>
        </authorList>
    </citation>
    <scope>NUCLEOTIDE SEQUENCE [LARGE SCALE GENOMIC DNA]</scope>
    <source>
        <strain>ATCC 200026 / FGSC A1120 / IAM 13836 / NRRL 3357 / JCM 12722 / SRRC 167</strain>
    </source>
</reference>
<reference key="2">
    <citation type="journal article" date="2010" name="Appl. Environ. Microbiol.">
        <title>HypC, the anthrone oxidase involved in aflatoxin biosynthesis.</title>
        <authorList>
            <person name="Ehrlich K.C."/>
            <person name="Li P."/>
            <person name="Scharfenstein L."/>
            <person name="Chang P.K."/>
        </authorList>
    </citation>
    <scope>FUNCTION</scope>
    <scope>CATALYTIC ACTIVITY</scope>
    <scope>PATHWAY</scope>
    <scope>DISRUPTION PHENOTYPE</scope>
</reference>
<protein>
    <recommendedName>
        <fullName>Noranthrone monooxygenase</fullName>
        <ecNumber>1.13.12.20</ecNumber>
    </recommendedName>
</protein>
<name>HYPC_ASPFN</name>
<dbReference type="EC" id="1.13.12.20"/>
<dbReference type="EMBL" id="EQ963478">
    <property type="protein sequence ID" value="EED51174.1"/>
    <property type="molecule type" value="Genomic_DNA"/>
</dbReference>
<dbReference type="RefSeq" id="XP_002379950.1">
    <property type="nucleotide sequence ID" value="XM_002379909.1"/>
</dbReference>
<dbReference type="STRING" id="332952.B8NI03"/>
<dbReference type="EnsemblFungi" id="EED51174">
    <property type="protein sequence ID" value="EED51174"/>
    <property type="gene ID" value="AFLA_139400"/>
</dbReference>
<dbReference type="VEuPathDB" id="FungiDB:AFLA_006310"/>
<dbReference type="eggNOG" id="ENOG502SBMN">
    <property type="taxonomic scope" value="Eukaryota"/>
</dbReference>
<dbReference type="HOGENOM" id="CLU_105974_0_0_1"/>
<dbReference type="OMA" id="RMYHYGH"/>
<dbReference type="UniPathway" id="UPA00287"/>
<dbReference type="GO" id="GO:0016020">
    <property type="term" value="C:membrane"/>
    <property type="evidence" value="ECO:0007669"/>
    <property type="project" value="UniProtKB-SubCell"/>
</dbReference>
<dbReference type="GO" id="GO:0004497">
    <property type="term" value="F:monooxygenase activity"/>
    <property type="evidence" value="ECO:0007669"/>
    <property type="project" value="UniProtKB-KW"/>
</dbReference>
<dbReference type="GO" id="GO:0045122">
    <property type="term" value="P:aflatoxin biosynthetic process"/>
    <property type="evidence" value="ECO:0007669"/>
    <property type="project" value="UniProtKB-UniPathway"/>
</dbReference>
<dbReference type="InterPro" id="IPR013901">
    <property type="entry name" value="Anthrone_oxy"/>
</dbReference>
<dbReference type="PANTHER" id="PTHR35042">
    <property type="entry name" value="ANTHRONE OXYGENASE ENCC"/>
    <property type="match status" value="1"/>
</dbReference>
<dbReference type="PANTHER" id="PTHR35042:SF3">
    <property type="entry name" value="ANTHRONE OXYGENASE-RELATED"/>
    <property type="match status" value="1"/>
</dbReference>
<dbReference type="Pfam" id="PF08592">
    <property type="entry name" value="Anthrone_oxy"/>
    <property type="match status" value="1"/>
</dbReference>
<accession>B8NI03</accession>